<accession>Q9FKR9</accession>
<accession>Q9FNZ0</accession>
<gene>
    <name type="primary">ZFWD3</name>
    <name type="ordered locus">At5g40880</name>
    <name type="ORF">MHK7.11</name>
</gene>
<name>C3H59_ARATH</name>
<evidence type="ECO:0000255" key="1">
    <source>
        <dbReference type="PROSITE-ProRule" id="PRU00723"/>
    </source>
</evidence>
<evidence type="ECO:0000256" key="2">
    <source>
        <dbReference type="SAM" id="MobiDB-lite"/>
    </source>
</evidence>
<sequence length="472" mass="51297">MGHQSSWMKQTVIDSVVQSSKVGVFSMFSMDYKAPRKYSHGRNFGVARQQDFAADIVTRRPYAPYDNGMKKGPNKLSRNLVWTSKEYKSPEGNRPRQNAANGSAKPQVIGTGHRVSNQPRKNAVYGPRSSSLSDTRGCGPRLNGSPKKSVCNFWKDGNCKKGEKCQFLHSWSCFPGLAMVAALEGHKNDIKGIALPQGSDKLFSVSGDGTLLIWDCNSGQCVRSINLQAEAGSLISEGPWVFLGLPNAVKAFNVQNSKDVHLEGVVGQVHAMTAANGMLFAGTSSGSILVWKATDSESDPFKYLTSLEGHHSGEVTCFVVGGEVLYSGSVDKTIKVWDLNTLQCRMTLKQHIGTVTSLLCWDKCLISSSLDGTIKLWACSENESLKVVQTRKQELSVHTLCGMHDAEAKPIMFCSYQNGAVGIFDLPSFEERGKMFSTQTICTLTIGPGGLLFSGDKSGNLRVWSLASGTKV</sequence>
<proteinExistence type="evidence at transcript level"/>
<organism>
    <name type="scientific">Arabidopsis thaliana</name>
    <name type="common">Mouse-ear cress</name>
    <dbReference type="NCBI Taxonomy" id="3702"/>
    <lineage>
        <taxon>Eukaryota</taxon>
        <taxon>Viridiplantae</taxon>
        <taxon>Streptophyta</taxon>
        <taxon>Embryophyta</taxon>
        <taxon>Tracheophyta</taxon>
        <taxon>Spermatophyta</taxon>
        <taxon>Magnoliopsida</taxon>
        <taxon>eudicotyledons</taxon>
        <taxon>Gunneridae</taxon>
        <taxon>Pentapetalae</taxon>
        <taxon>rosids</taxon>
        <taxon>malvids</taxon>
        <taxon>Brassicales</taxon>
        <taxon>Brassicaceae</taxon>
        <taxon>Camelineae</taxon>
        <taxon>Arabidopsis</taxon>
    </lineage>
</organism>
<protein>
    <recommendedName>
        <fullName>Zinc finger CCCH domain-containing protein 59</fullName>
        <shortName>AtC3H59</shortName>
    </recommendedName>
    <alternativeName>
        <fullName>Zinc finger CCCH domain and WD40 repeat-containing protein 3</fullName>
    </alternativeName>
</protein>
<keyword id="KW-0238">DNA-binding</keyword>
<keyword id="KW-0479">Metal-binding</keyword>
<keyword id="KW-1185">Reference proteome</keyword>
<keyword id="KW-0677">Repeat</keyword>
<keyword id="KW-0853">WD repeat</keyword>
<keyword id="KW-0862">Zinc</keyword>
<keyword id="KW-0863">Zinc-finger</keyword>
<reference key="1">
    <citation type="journal article" date="1998" name="DNA Res.">
        <title>Structural analysis of Arabidopsis thaliana chromosome 5. V. Sequence features of the regions of 1,381,565 bp covered by twenty one physically assigned P1 and TAC clones.</title>
        <authorList>
            <person name="Kaneko T."/>
            <person name="Kotani H."/>
            <person name="Nakamura Y."/>
            <person name="Sato S."/>
            <person name="Asamizu E."/>
            <person name="Miyajima N."/>
            <person name="Tabata S."/>
        </authorList>
    </citation>
    <scope>NUCLEOTIDE SEQUENCE [LARGE SCALE GENOMIC DNA]</scope>
    <source>
        <strain>cv. Columbia</strain>
    </source>
</reference>
<reference key="2">
    <citation type="journal article" date="2017" name="Plant J.">
        <title>Araport11: a complete reannotation of the Arabidopsis thaliana reference genome.</title>
        <authorList>
            <person name="Cheng C.Y."/>
            <person name="Krishnakumar V."/>
            <person name="Chan A.P."/>
            <person name="Thibaud-Nissen F."/>
            <person name="Schobel S."/>
            <person name="Town C.D."/>
        </authorList>
    </citation>
    <scope>GENOME REANNOTATION</scope>
    <source>
        <strain>cv. Columbia</strain>
    </source>
</reference>
<reference key="3">
    <citation type="submission" date="2007-03" db="EMBL/GenBank/DDBJ databases">
        <title>Arabidopsis ORF clones.</title>
        <authorList>
            <person name="Kim C.J."/>
            <person name="Bautista V.R."/>
            <person name="Chen H."/>
            <person name="De Los Reyes C."/>
            <person name="Wu S.Y."/>
            <person name="Ecker J.R."/>
        </authorList>
    </citation>
    <scope>NUCLEOTIDE SEQUENCE [LARGE SCALE MRNA]</scope>
    <source>
        <strain>cv. Columbia</strain>
    </source>
</reference>
<reference key="4">
    <citation type="journal article" date="2000" name="Gene">
        <title>ZFWD: a novel subfamily of plant proteins containing a C3H zinc finger and seven WD40 repeats.</title>
        <authorList>
            <person name="Terol J."/>
            <person name="Bargues M."/>
            <person name="Perez-Alonso M."/>
        </authorList>
    </citation>
    <scope>NUCLEOTIDE SEQUENCE [MRNA] OF 27-472</scope>
    <source>
        <strain>cv. Columbia</strain>
    </source>
</reference>
<reference key="5">
    <citation type="journal article" date="2008" name="BMC Genomics">
        <title>Genome-wide analysis of CCCH zinc finger family in Arabidopsis and rice.</title>
        <authorList>
            <person name="Wang D."/>
            <person name="Guo Y."/>
            <person name="Wu C."/>
            <person name="Yang G."/>
            <person name="Li Y."/>
            <person name="Zheng C."/>
        </authorList>
    </citation>
    <scope>NOMENCLATURE</scope>
</reference>
<dbReference type="EMBL" id="AB011477">
    <property type="protein sequence ID" value="BAB11350.1"/>
    <property type="molecule type" value="Genomic_DNA"/>
</dbReference>
<dbReference type="EMBL" id="CP002688">
    <property type="protein sequence ID" value="AED94611.1"/>
    <property type="molecule type" value="Genomic_DNA"/>
</dbReference>
<dbReference type="EMBL" id="BT030400">
    <property type="protein sequence ID" value="ABO45703.1"/>
    <property type="molecule type" value="mRNA"/>
</dbReference>
<dbReference type="EMBL" id="AJ252065">
    <property type="protein sequence ID" value="CAC19849.1"/>
    <property type="molecule type" value="mRNA"/>
</dbReference>
<dbReference type="RefSeq" id="NP_198904.1">
    <property type="nucleotide sequence ID" value="NM_123453.3"/>
</dbReference>
<dbReference type="SMR" id="Q9FKR9"/>
<dbReference type="BioGRID" id="19340">
    <property type="interactions" value="3"/>
</dbReference>
<dbReference type="FunCoup" id="Q9FKR9">
    <property type="interactions" value="1"/>
</dbReference>
<dbReference type="IntAct" id="Q9FKR9">
    <property type="interactions" value="3"/>
</dbReference>
<dbReference type="STRING" id="3702.Q9FKR9"/>
<dbReference type="PaxDb" id="3702-AT5G40880.1"/>
<dbReference type="EnsemblPlants" id="AT5G40880.1">
    <property type="protein sequence ID" value="AT5G40880.1"/>
    <property type="gene ID" value="AT5G40880"/>
</dbReference>
<dbReference type="GeneID" id="834089"/>
<dbReference type="Gramene" id="AT5G40880.1">
    <property type="protein sequence ID" value="AT5G40880.1"/>
    <property type="gene ID" value="AT5G40880"/>
</dbReference>
<dbReference type="KEGG" id="ath:AT5G40880"/>
<dbReference type="Araport" id="AT5G40880"/>
<dbReference type="TAIR" id="AT5G40880"/>
<dbReference type="eggNOG" id="KOG0274">
    <property type="taxonomic scope" value="Eukaryota"/>
</dbReference>
<dbReference type="HOGENOM" id="CLU_037680_1_0_1"/>
<dbReference type="InParanoid" id="Q9FKR9"/>
<dbReference type="PhylomeDB" id="Q9FKR9"/>
<dbReference type="PRO" id="PR:Q9FKR9"/>
<dbReference type="Proteomes" id="UP000006548">
    <property type="component" value="Chromosome 5"/>
</dbReference>
<dbReference type="ExpressionAtlas" id="Q9FKR9">
    <property type="expression patterns" value="baseline and differential"/>
</dbReference>
<dbReference type="GO" id="GO:0005634">
    <property type="term" value="C:nucleus"/>
    <property type="evidence" value="ECO:0000314"/>
    <property type="project" value="TAIR"/>
</dbReference>
<dbReference type="GO" id="GO:0003677">
    <property type="term" value="F:DNA binding"/>
    <property type="evidence" value="ECO:0007669"/>
    <property type="project" value="UniProtKB-KW"/>
</dbReference>
<dbReference type="GO" id="GO:0008270">
    <property type="term" value="F:zinc ion binding"/>
    <property type="evidence" value="ECO:0007669"/>
    <property type="project" value="UniProtKB-KW"/>
</dbReference>
<dbReference type="FunFam" id="2.130.10.10:FF:000869">
    <property type="entry name" value="Zinc finger CCCH domain-containing protein 48"/>
    <property type="match status" value="1"/>
</dbReference>
<dbReference type="Gene3D" id="2.130.10.10">
    <property type="entry name" value="YVTN repeat-like/Quinoprotein amine dehydrogenase"/>
    <property type="match status" value="1"/>
</dbReference>
<dbReference type="InterPro" id="IPR020472">
    <property type="entry name" value="G-protein_beta_WD-40_rep"/>
</dbReference>
<dbReference type="InterPro" id="IPR015943">
    <property type="entry name" value="WD40/YVTN_repeat-like_dom_sf"/>
</dbReference>
<dbReference type="InterPro" id="IPR019775">
    <property type="entry name" value="WD40_repeat_CS"/>
</dbReference>
<dbReference type="InterPro" id="IPR036322">
    <property type="entry name" value="WD40_repeat_dom_sf"/>
</dbReference>
<dbReference type="InterPro" id="IPR001680">
    <property type="entry name" value="WD40_rpt"/>
</dbReference>
<dbReference type="InterPro" id="IPR044715">
    <property type="entry name" value="WDR86-like"/>
</dbReference>
<dbReference type="InterPro" id="IPR000571">
    <property type="entry name" value="Znf_CCCH"/>
</dbReference>
<dbReference type="InterPro" id="IPR036855">
    <property type="entry name" value="Znf_CCCH_sf"/>
</dbReference>
<dbReference type="PANTHER" id="PTHR44489">
    <property type="match status" value="1"/>
</dbReference>
<dbReference type="PANTHER" id="PTHR44489:SF14">
    <property type="entry name" value="ZINC FINGER CCCH DOMAIN-CONTAINING PROTEIN 59-RELATED"/>
    <property type="match status" value="1"/>
</dbReference>
<dbReference type="Pfam" id="PF00400">
    <property type="entry name" value="WD40"/>
    <property type="match status" value="3"/>
</dbReference>
<dbReference type="Pfam" id="PF00642">
    <property type="entry name" value="zf-CCCH"/>
    <property type="match status" value="1"/>
</dbReference>
<dbReference type="PRINTS" id="PR00320">
    <property type="entry name" value="GPROTEINBRPT"/>
</dbReference>
<dbReference type="SMART" id="SM00320">
    <property type="entry name" value="WD40"/>
    <property type="match status" value="5"/>
</dbReference>
<dbReference type="SMART" id="SM00356">
    <property type="entry name" value="ZnF_C3H1"/>
    <property type="match status" value="1"/>
</dbReference>
<dbReference type="SUPFAM" id="SSF90229">
    <property type="entry name" value="CCCH zinc finger"/>
    <property type="match status" value="1"/>
</dbReference>
<dbReference type="SUPFAM" id="SSF50978">
    <property type="entry name" value="WD40 repeat-like"/>
    <property type="match status" value="1"/>
</dbReference>
<dbReference type="PROSITE" id="PS00678">
    <property type="entry name" value="WD_REPEATS_1"/>
    <property type="match status" value="2"/>
</dbReference>
<dbReference type="PROSITE" id="PS50082">
    <property type="entry name" value="WD_REPEATS_2"/>
    <property type="match status" value="2"/>
</dbReference>
<dbReference type="PROSITE" id="PS50294">
    <property type="entry name" value="WD_REPEATS_REGION"/>
    <property type="match status" value="1"/>
</dbReference>
<dbReference type="PROSITE" id="PS50103">
    <property type="entry name" value="ZF_C3H1"/>
    <property type="match status" value="1"/>
</dbReference>
<feature type="chain" id="PRO_0000372010" description="Zinc finger CCCH domain-containing protein 59">
    <location>
        <begin position="1"/>
        <end position="472"/>
    </location>
</feature>
<feature type="repeat" description="WD 1">
    <location>
        <begin position="185"/>
        <end position="226"/>
    </location>
</feature>
<feature type="repeat" description="WD 2">
    <location>
        <begin position="261"/>
        <end position="301"/>
    </location>
</feature>
<feature type="repeat" description="WD 3">
    <location>
        <begin position="310"/>
        <end position="347"/>
    </location>
</feature>
<feature type="repeat" description="WD 4">
    <location>
        <begin position="350"/>
        <end position="387"/>
    </location>
</feature>
<feature type="repeat" description="WD 5">
    <location>
        <begin position="436"/>
        <end position="472"/>
    </location>
</feature>
<feature type="zinc finger region" description="C3H1-type" evidence="1">
    <location>
        <begin position="145"/>
        <end position="172"/>
    </location>
</feature>
<feature type="region of interest" description="Disordered" evidence="2">
    <location>
        <begin position="87"/>
        <end position="139"/>
    </location>
</feature>